<accession>Q4A0U0</accession>
<sequence>MKTLNQLQDLKVNKEKISMVTAYDYPSAKQVEAADIDIILVGDSLGMTVLGYDSTVQVTVADMIHHTKAVRRGAPNTYLIVDVPFGAVGVNDQYDLEIAVKLYKETDANAIKAEGAHLTQYIKNCSNMGIPVVSHLGLTPQSVGIMGYKMQAGNKEAARQLIEDAYAVQQAGAVMLVLEAVPSDLAAEISDKLDIPVIGIGAGKETDGQVLVYHDLLNYAVEHRAKFVKQFGDFSVGIDALKQYNNEVKAEQFPGEAHTYKKQIMNEVTE</sequence>
<feature type="chain" id="PRO_0000297387" description="3-methyl-2-oxobutanoate hydroxymethyltransferase">
    <location>
        <begin position="1"/>
        <end position="270"/>
    </location>
</feature>
<feature type="active site" description="Proton acceptor" evidence="1">
    <location>
        <position position="179"/>
    </location>
</feature>
<feature type="binding site" evidence="1">
    <location>
        <begin position="43"/>
        <end position="44"/>
    </location>
    <ligand>
        <name>3-methyl-2-oxobutanoate</name>
        <dbReference type="ChEBI" id="CHEBI:11851"/>
    </ligand>
</feature>
<feature type="binding site" evidence="1">
    <location>
        <position position="43"/>
    </location>
    <ligand>
        <name>Mg(2+)</name>
        <dbReference type="ChEBI" id="CHEBI:18420"/>
    </ligand>
</feature>
<feature type="binding site" evidence="1">
    <location>
        <position position="82"/>
    </location>
    <ligand>
        <name>3-methyl-2-oxobutanoate</name>
        <dbReference type="ChEBI" id="CHEBI:11851"/>
    </ligand>
</feature>
<feature type="binding site" evidence="1">
    <location>
        <position position="82"/>
    </location>
    <ligand>
        <name>Mg(2+)</name>
        <dbReference type="ChEBI" id="CHEBI:18420"/>
    </ligand>
</feature>
<feature type="binding site" evidence="1">
    <location>
        <position position="112"/>
    </location>
    <ligand>
        <name>3-methyl-2-oxobutanoate</name>
        <dbReference type="ChEBI" id="CHEBI:11851"/>
    </ligand>
</feature>
<feature type="binding site" evidence="1">
    <location>
        <position position="114"/>
    </location>
    <ligand>
        <name>Mg(2+)</name>
        <dbReference type="ChEBI" id="CHEBI:18420"/>
    </ligand>
</feature>
<reference key="1">
    <citation type="journal article" date="2005" name="Proc. Natl. Acad. Sci. U.S.A.">
        <title>Whole genome sequence of Staphylococcus saprophyticus reveals the pathogenesis of uncomplicated urinary tract infection.</title>
        <authorList>
            <person name="Kuroda M."/>
            <person name="Yamashita A."/>
            <person name="Hirakawa H."/>
            <person name="Kumano M."/>
            <person name="Morikawa K."/>
            <person name="Higashide M."/>
            <person name="Maruyama A."/>
            <person name="Inose Y."/>
            <person name="Matoba K."/>
            <person name="Toh H."/>
            <person name="Kuhara S."/>
            <person name="Hattori M."/>
            <person name="Ohta T."/>
        </authorList>
    </citation>
    <scope>NUCLEOTIDE SEQUENCE [LARGE SCALE GENOMIC DNA]</scope>
    <source>
        <strain>ATCC 15305 / DSM 20229 / NCIMB 8711 / NCTC 7292 / S-41</strain>
    </source>
</reference>
<evidence type="ECO:0000255" key="1">
    <source>
        <dbReference type="HAMAP-Rule" id="MF_00156"/>
    </source>
</evidence>
<organism>
    <name type="scientific">Staphylococcus saprophyticus subsp. saprophyticus (strain ATCC 15305 / DSM 20229 / NCIMB 8711 / NCTC 7292 / S-41)</name>
    <dbReference type="NCBI Taxonomy" id="342451"/>
    <lineage>
        <taxon>Bacteria</taxon>
        <taxon>Bacillati</taxon>
        <taxon>Bacillota</taxon>
        <taxon>Bacilli</taxon>
        <taxon>Bacillales</taxon>
        <taxon>Staphylococcaceae</taxon>
        <taxon>Staphylococcus</taxon>
    </lineage>
</organism>
<name>PANB_STAS1</name>
<keyword id="KW-0963">Cytoplasm</keyword>
<keyword id="KW-0460">Magnesium</keyword>
<keyword id="KW-0479">Metal-binding</keyword>
<keyword id="KW-0566">Pantothenate biosynthesis</keyword>
<keyword id="KW-1185">Reference proteome</keyword>
<keyword id="KW-0808">Transferase</keyword>
<protein>
    <recommendedName>
        <fullName evidence="1">3-methyl-2-oxobutanoate hydroxymethyltransferase</fullName>
        <ecNumber evidence="1">2.1.2.11</ecNumber>
    </recommendedName>
    <alternativeName>
        <fullName evidence="1">Ketopantoate hydroxymethyltransferase</fullName>
        <shortName evidence="1">KPHMT</shortName>
    </alternativeName>
</protein>
<gene>
    <name evidence="1" type="primary">panB</name>
    <name type="ordered locus">SSP0154</name>
</gene>
<dbReference type="EC" id="2.1.2.11" evidence="1"/>
<dbReference type="EMBL" id="AP008934">
    <property type="protein sequence ID" value="BAE17299.1"/>
    <property type="molecule type" value="Genomic_DNA"/>
</dbReference>
<dbReference type="RefSeq" id="WP_011302152.1">
    <property type="nucleotide sequence ID" value="NZ_MTGA01000037.1"/>
</dbReference>
<dbReference type="SMR" id="Q4A0U0"/>
<dbReference type="GeneID" id="3615010"/>
<dbReference type="KEGG" id="ssp:SSP0154"/>
<dbReference type="PATRIC" id="fig|342451.11.peg.159"/>
<dbReference type="eggNOG" id="COG0413">
    <property type="taxonomic scope" value="Bacteria"/>
</dbReference>
<dbReference type="HOGENOM" id="CLU_036645_1_0_9"/>
<dbReference type="OrthoDB" id="9781789at2"/>
<dbReference type="UniPathway" id="UPA00028">
    <property type="reaction ID" value="UER00003"/>
</dbReference>
<dbReference type="Proteomes" id="UP000006371">
    <property type="component" value="Chromosome"/>
</dbReference>
<dbReference type="GO" id="GO:0005737">
    <property type="term" value="C:cytoplasm"/>
    <property type="evidence" value="ECO:0007669"/>
    <property type="project" value="UniProtKB-SubCell"/>
</dbReference>
<dbReference type="GO" id="GO:0003864">
    <property type="term" value="F:3-methyl-2-oxobutanoate hydroxymethyltransferase activity"/>
    <property type="evidence" value="ECO:0007669"/>
    <property type="project" value="UniProtKB-UniRule"/>
</dbReference>
<dbReference type="GO" id="GO:0000287">
    <property type="term" value="F:magnesium ion binding"/>
    <property type="evidence" value="ECO:0007669"/>
    <property type="project" value="TreeGrafter"/>
</dbReference>
<dbReference type="GO" id="GO:0015940">
    <property type="term" value="P:pantothenate biosynthetic process"/>
    <property type="evidence" value="ECO:0007669"/>
    <property type="project" value="UniProtKB-UniRule"/>
</dbReference>
<dbReference type="CDD" id="cd06557">
    <property type="entry name" value="KPHMT-like"/>
    <property type="match status" value="1"/>
</dbReference>
<dbReference type="FunFam" id="3.20.20.60:FF:000003">
    <property type="entry name" value="3-methyl-2-oxobutanoate hydroxymethyltransferase"/>
    <property type="match status" value="1"/>
</dbReference>
<dbReference type="Gene3D" id="3.20.20.60">
    <property type="entry name" value="Phosphoenolpyruvate-binding domains"/>
    <property type="match status" value="1"/>
</dbReference>
<dbReference type="HAMAP" id="MF_00156">
    <property type="entry name" value="PanB"/>
    <property type="match status" value="1"/>
</dbReference>
<dbReference type="InterPro" id="IPR003700">
    <property type="entry name" value="Pantoate_hydroxy_MeTrfase"/>
</dbReference>
<dbReference type="InterPro" id="IPR015813">
    <property type="entry name" value="Pyrv/PenolPyrv_kinase-like_dom"/>
</dbReference>
<dbReference type="InterPro" id="IPR040442">
    <property type="entry name" value="Pyrv_kinase-like_dom_sf"/>
</dbReference>
<dbReference type="NCBIfam" id="TIGR00222">
    <property type="entry name" value="panB"/>
    <property type="match status" value="1"/>
</dbReference>
<dbReference type="NCBIfam" id="NF001452">
    <property type="entry name" value="PRK00311.1"/>
    <property type="match status" value="1"/>
</dbReference>
<dbReference type="PANTHER" id="PTHR20881">
    <property type="entry name" value="3-METHYL-2-OXOBUTANOATE HYDROXYMETHYLTRANSFERASE"/>
    <property type="match status" value="1"/>
</dbReference>
<dbReference type="PANTHER" id="PTHR20881:SF0">
    <property type="entry name" value="3-METHYL-2-OXOBUTANOATE HYDROXYMETHYLTRANSFERASE"/>
    <property type="match status" value="1"/>
</dbReference>
<dbReference type="Pfam" id="PF02548">
    <property type="entry name" value="Pantoate_transf"/>
    <property type="match status" value="1"/>
</dbReference>
<dbReference type="PIRSF" id="PIRSF000388">
    <property type="entry name" value="Pantoate_hydroxy_MeTrfase"/>
    <property type="match status" value="1"/>
</dbReference>
<dbReference type="SUPFAM" id="SSF51621">
    <property type="entry name" value="Phosphoenolpyruvate/pyruvate domain"/>
    <property type="match status" value="1"/>
</dbReference>
<proteinExistence type="inferred from homology"/>
<comment type="function">
    <text evidence="1">Catalyzes the reversible reaction in which hydroxymethyl group from 5,10-methylenetetrahydrofolate is transferred onto alpha-ketoisovalerate to form ketopantoate.</text>
</comment>
<comment type="catalytic activity">
    <reaction evidence="1">
        <text>3-methyl-2-oxobutanoate + (6R)-5,10-methylene-5,6,7,8-tetrahydrofolate + H2O = 2-dehydropantoate + (6S)-5,6,7,8-tetrahydrofolate</text>
        <dbReference type="Rhea" id="RHEA:11824"/>
        <dbReference type="ChEBI" id="CHEBI:11561"/>
        <dbReference type="ChEBI" id="CHEBI:11851"/>
        <dbReference type="ChEBI" id="CHEBI:15377"/>
        <dbReference type="ChEBI" id="CHEBI:15636"/>
        <dbReference type="ChEBI" id="CHEBI:57453"/>
        <dbReference type="EC" id="2.1.2.11"/>
    </reaction>
</comment>
<comment type="cofactor">
    <cofactor evidence="1">
        <name>Mg(2+)</name>
        <dbReference type="ChEBI" id="CHEBI:18420"/>
    </cofactor>
    <text evidence="1">Binds 1 Mg(2+) ion per subunit.</text>
</comment>
<comment type="pathway">
    <text evidence="1">Cofactor biosynthesis; (R)-pantothenate biosynthesis; (R)-pantoate from 3-methyl-2-oxobutanoate: step 1/2.</text>
</comment>
<comment type="subunit">
    <text evidence="1">Homodecamer; pentamer of dimers.</text>
</comment>
<comment type="subcellular location">
    <subcellularLocation>
        <location evidence="1">Cytoplasm</location>
    </subcellularLocation>
</comment>
<comment type="similarity">
    <text evidence="1">Belongs to the PanB family.</text>
</comment>